<accession>B8QHP3</accession>
<organism>
    <name type="scientific">Starmerella bombicola</name>
    <name type="common">Yeast</name>
    <name type="synonym">Candida bombicola</name>
    <dbReference type="NCBI Taxonomy" id="75736"/>
    <lineage>
        <taxon>Eukaryota</taxon>
        <taxon>Fungi</taxon>
        <taxon>Dikarya</taxon>
        <taxon>Ascomycota</taxon>
        <taxon>Saccharomycotina</taxon>
        <taxon>Dipodascomycetes</taxon>
        <taxon>Dipodascales</taxon>
        <taxon>Trichomonascaceae</taxon>
        <taxon>Starmerella</taxon>
    </lineage>
</organism>
<evidence type="ECO:0000250" key="1">
    <source>
        <dbReference type="UniProtKB" id="P04798"/>
    </source>
</evidence>
<evidence type="ECO:0000255" key="2"/>
<evidence type="ECO:0000269" key="3">
    <source>
    </source>
</evidence>
<evidence type="ECO:0000269" key="4">
    <source>
    </source>
</evidence>
<evidence type="ECO:0000303" key="5">
    <source>
    </source>
</evidence>
<evidence type="ECO:0000305" key="6"/>
<proteinExistence type="evidence at protein level"/>
<feature type="chain" id="PRO_0000447696" description="Cytochrome P450 52-E3">
    <location>
        <begin position="1"/>
        <end position="519"/>
    </location>
</feature>
<feature type="transmembrane region" description="Helical" evidence="2">
    <location>
        <begin position="10"/>
        <end position="30"/>
    </location>
</feature>
<feature type="binding site" description="axial binding residue" evidence="1">
    <location>
        <position position="461"/>
    </location>
    <ligand>
        <name>heme</name>
        <dbReference type="ChEBI" id="CHEBI:30413"/>
    </ligand>
    <ligandPart>
        <name>Fe</name>
        <dbReference type="ChEBI" id="CHEBI:18248"/>
    </ligandPart>
</feature>
<protein>
    <recommendedName>
        <fullName evidence="6">Cytochrome P450 52-E3</fullName>
        <shortName>CYP52-E3</shortName>
        <ecNumber evidence="4">1.14.14.80</ecNumber>
    </recommendedName>
    <alternativeName>
        <fullName evidence="5">Cytochrome P450 monooxygenase CYP52-E3</fullName>
    </alternativeName>
</protein>
<gene>
    <name evidence="5" type="primary">cyp52E3</name>
</gene>
<keyword id="KW-0349">Heme</keyword>
<keyword id="KW-0408">Iron</keyword>
<keyword id="KW-0472">Membrane</keyword>
<keyword id="KW-0479">Metal-binding</keyword>
<keyword id="KW-0503">Monooxygenase</keyword>
<keyword id="KW-0560">Oxidoreductase</keyword>
<keyword id="KW-0812">Transmembrane</keyword>
<keyword id="KW-1133">Transmembrane helix</keyword>
<dbReference type="EC" id="1.14.14.80" evidence="4"/>
<dbReference type="EMBL" id="EU552420">
    <property type="protein sequence ID" value="ACD75400.1"/>
    <property type="molecule type" value="Genomic_DNA"/>
</dbReference>
<dbReference type="SMR" id="B8QHP3"/>
<dbReference type="BRENDA" id="1.14.14.80">
    <property type="organism ID" value="1101"/>
</dbReference>
<dbReference type="GO" id="GO:0016020">
    <property type="term" value="C:membrane"/>
    <property type="evidence" value="ECO:0007669"/>
    <property type="project" value="UniProtKB-SubCell"/>
</dbReference>
<dbReference type="GO" id="GO:0020037">
    <property type="term" value="F:heme binding"/>
    <property type="evidence" value="ECO:0007669"/>
    <property type="project" value="InterPro"/>
</dbReference>
<dbReference type="GO" id="GO:0005506">
    <property type="term" value="F:iron ion binding"/>
    <property type="evidence" value="ECO:0007669"/>
    <property type="project" value="InterPro"/>
</dbReference>
<dbReference type="GO" id="GO:0102033">
    <property type="term" value="F:long-chain fatty acid omega-hydroxylase activity"/>
    <property type="evidence" value="ECO:0007669"/>
    <property type="project" value="UniProtKB-EC"/>
</dbReference>
<dbReference type="CDD" id="cd11063">
    <property type="entry name" value="CYP52"/>
    <property type="match status" value="1"/>
</dbReference>
<dbReference type="Gene3D" id="1.10.630.10">
    <property type="entry name" value="Cytochrome P450"/>
    <property type="match status" value="1"/>
</dbReference>
<dbReference type="InterPro" id="IPR001128">
    <property type="entry name" value="Cyt_P450"/>
</dbReference>
<dbReference type="InterPro" id="IPR017972">
    <property type="entry name" value="Cyt_P450_CS"/>
</dbReference>
<dbReference type="InterPro" id="IPR002974">
    <property type="entry name" value="Cyt_P450_E_CYP52_ascomycetes"/>
</dbReference>
<dbReference type="InterPro" id="IPR047146">
    <property type="entry name" value="Cyt_P450_E_CYP52_fungi"/>
</dbReference>
<dbReference type="InterPro" id="IPR002402">
    <property type="entry name" value="Cyt_P450_E_grp-II"/>
</dbReference>
<dbReference type="InterPro" id="IPR036396">
    <property type="entry name" value="Cyt_P450_sf"/>
</dbReference>
<dbReference type="PANTHER" id="PTHR24287">
    <property type="entry name" value="P450, PUTATIVE (EUROFUNG)-RELATED"/>
    <property type="match status" value="1"/>
</dbReference>
<dbReference type="PANTHER" id="PTHR24287:SF1">
    <property type="entry name" value="P450, PUTATIVE (EUROFUNG)-RELATED"/>
    <property type="match status" value="1"/>
</dbReference>
<dbReference type="Pfam" id="PF00067">
    <property type="entry name" value="p450"/>
    <property type="match status" value="1"/>
</dbReference>
<dbReference type="PRINTS" id="PR00464">
    <property type="entry name" value="EP450II"/>
</dbReference>
<dbReference type="PRINTS" id="PR01239">
    <property type="entry name" value="EP450IICYP52"/>
</dbReference>
<dbReference type="PRINTS" id="PR00385">
    <property type="entry name" value="P450"/>
</dbReference>
<dbReference type="SUPFAM" id="SSF48264">
    <property type="entry name" value="Cytochrome P450"/>
    <property type="match status" value="1"/>
</dbReference>
<dbReference type="PROSITE" id="PS00086">
    <property type="entry name" value="CYTOCHROME_P450"/>
    <property type="match status" value="1"/>
</dbReference>
<comment type="function">
    <text evidence="4">Catalyzes the terminal (at the omega-position) hydroxylation of a fatty acid. Probably involved in alkane metabolism. Has minor activity toward myristic acid, palmitic acid, palmitoleic acid and oleic acid.</text>
</comment>
<comment type="catalytic activity">
    <reaction evidence="4">
        <text>an omega-methyl-long-chain fatty acid + reduced [NADPH--hemoprotein reductase] + O2 = an omega-hydroxy-long-chain fatty acid + oxidized [NADPH--hemoprotein reductase] + H2O + H(+)</text>
        <dbReference type="Rhea" id="RHEA:56748"/>
        <dbReference type="Rhea" id="RHEA-COMP:11964"/>
        <dbReference type="Rhea" id="RHEA-COMP:11965"/>
        <dbReference type="ChEBI" id="CHEBI:15377"/>
        <dbReference type="ChEBI" id="CHEBI:15378"/>
        <dbReference type="ChEBI" id="CHEBI:15379"/>
        <dbReference type="ChEBI" id="CHEBI:57618"/>
        <dbReference type="ChEBI" id="CHEBI:58210"/>
        <dbReference type="ChEBI" id="CHEBI:140991"/>
        <dbReference type="ChEBI" id="CHEBI:140992"/>
        <dbReference type="EC" id="1.14.14.80"/>
    </reaction>
</comment>
<comment type="catalytic activity">
    <reaction evidence="4">
        <text>(9Z)-octadecenoate + reduced [NADPH--hemoprotein reductase] + O2 = 18-hydroxy-(9Z)-octadecenoate + oxidized [NADPH--hemoprotein reductase] + H2O + H(+)</text>
        <dbReference type="Rhea" id="RHEA:41728"/>
        <dbReference type="Rhea" id="RHEA-COMP:11964"/>
        <dbReference type="Rhea" id="RHEA-COMP:11965"/>
        <dbReference type="ChEBI" id="CHEBI:15377"/>
        <dbReference type="ChEBI" id="CHEBI:15378"/>
        <dbReference type="ChEBI" id="CHEBI:15379"/>
        <dbReference type="ChEBI" id="CHEBI:30823"/>
        <dbReference type="ChEBI" id="CHEBI:57618"/>
        <dbReference type="ChEBI" id="CHEBI:58210"/>
        <dbReference type="ChEBI" id="CHEBI:78424"/>
        <dbReference type="EC" id="1.14.14.80"/>
    </reaction>
</comment>
<comment type="catalytic activity">
    <reaction evidence="4">
        <text>hexadecanoate + reduced [NADPH--hemoprotein reductase] + O2 = 16-hydroxyhexadecanoate + oxidized [NADPH--hemoprotein reductase] + H2O + H(+)</text>
        <dbReference type="Rhea" id="RHEA:40199"/>
        <dbReference type="Rhea" id="RHEA-COMP:11964"/>
        <dbReference type="Rhea" id="RHEA-COMP:11965"/>
        <dbReference type="ChEBI" id="CHEBI:7896"/>
        <dbReference type="ChEBI" id="CHEBI:15377"/>
        <dbReference type="ChEBI" id="CHEBI:15378"/>
        <dbReference type="ChEBI" id="CHEBI:15379"/>
        <dbReference type="ChEBI" id="CHEBI:55329"/>
        <dbReference type="ChEBI" id="CHEBI:57618"/>
        <dbReference type="ChEBI" id="CHEBI:58210"/>
        <dbReference type="EC" id="1.14.14.80"/>
    </reaction>
</comment>
<comment type="catalytic activity">
    <reaction evidence="4">
        <text>(9Z)-hexadecenoate + reduced [NADPH--hemoprotein reductase] + O2 = (9Z)-16-hydroxyhexadec-9-enoate + oxidized [NADPH--hemoprotein reductase] + H2O + H(+)</text>
        <dbReference type="Rhea" id="RHEA:60940"/>
        <dbReference type="Rhea" id="RHEA-COMP:11964"/>
        <dbReference type="Rhea" id="RHEA-COMP:11965"/>
        <dbReference type="ChEBI" id="CHEBI:15377"/>
        <dbReference type="ChEBI" id="CHEBI:15378"/>
        <dbReference type="ChEBI" id="CHEBI:15379"/>
        <dbReference type="ChEBI" id="CHEBI:32372"/>
        <dbReference type="ChEBI" id="CHEBI:57618"/>
        <dbReference type="ChEBI" id="CHEBI:58210"/>
        <dbReference type="ChEBI" id="CHEBI:144048"/>
    </reaction>
</comment>
<comment type="cofactor">
    <cofactor evidence="1">
        <name>heme</name>
        <dbReference type="ChEBI" id="CHEBI:30413"/>
    </cofactor>
</comment>
<comment type="subcellular location">
    <subcellularLocation>
        <location evidence="2">Membrane</location>
        <topology evidence="2">Single-pass membrane protein</topology>
    </subcellularLocation>
</comment>
<comment type="induction">
    <text evidence="3">Up-regulated when grown on alkanes as sole carbon source.</text>
</comment>
<comment type="similarity">
    <text evidence="6">Belongs to the cytochrome P450 family.</text>
</comment>
<name>CP52E_STABO</name>
<reference key="1">
    <citation type="journal article" date="2009" name="FEMS Yeast Res.">
        <title>Importance of the cytochrome P450 monooxygenase CYP52 family for the sophorolipid-producing yeast Candida bombicola.</title>
        <authorList>
            <person name="van Bogaert I.N."/>
            <person name="Demey M."/>
            <person name="Develter D."/>
            <person name="Soetaert W."/>
            <person name="Vandamme E.J."/>
        </authorList>
    </citation>
    <scope>NUCLEOTIDE SEQUENCE [GENOMIC DNA]</scope>
    <scope>INDUCTION</scope>
    <source>
        <strain>ATCC 22214 / CBS 6009 / JCM 9596 / NBRC 10243 / NRRL Y-17069</strain>
    </source>
</reference>
<reference key="2">
    <citation type="journal article" date="2014" name="Appl. Environ. Microbiol.">
        <title>Expression and characterization of CYP52 genes involved in the biosynthesis of sophorolipid and alkane metabolism from Starmerella bombicola.</title>
        <authorList>
            <person name="Huang F.C."/>
            <person name="Peter A."/>
            <person name="Schwab W."/>
        </authorList>
    </citation>
    <scope>FUNCTION</scope>
    <scope>CATALYTIC ACTIVITY</scope>
    <scope>SUBSTRATE SPECIFICITY</scope>
</reference>
<sequence length="519" mass="58940">MNINFSDVLVLGGISVSFLLAYQAIYFYFIYSPRAKKLGCALPPVFFSFPLGIPEVIRLVNAWFNDDLLEYFTFKFEEFQRKTGFQSVAGQLWIGTIEPENIKTMLATSFKDYSLGFRYEAMYGLLGNGIFTLSGEGWKHSRALLRPQFSREQVSHLESMRTHINMLINNHFKGGKVVDAQVLFHNLTIDTATEFLFGESTNTLDPALAQHGFPGPKGLVTGEQFAEAFTSALELLSVRVMAGAAWFLVWTPKFWRSCKVCHNFIDYFVFKALATPMEKDQEADRYVFIRELTKETSDPRVIRDQALNILLAGRDTTAALLSFTTYYLGAYPEVYDELREAVIADFGKEDAEPPTFEQLKQCKVLQNVIREVLRLHPNVPLNFREAITDTKFPTGGGPNGDQPVFVPKGQKVFYATYVMQRNEGLWGPDSTTFRPDRWNESREAIASGWDYIPFNGGPRICLGQQFALTEASYTLVRICQEFSRIEVLHPDVITSRNVMKQRMRLTNSSSGGVIAKFIR</sequence>